<dbReference type="EMBL" id="AE014296">
    <property type="protein sequence ID" value="AAF50214.1"/>
    <property type="molecule type" value="Genomic_DNA"/>
</dbReference>
<dbReference type="EMBL" id="AY051447">
    <property type="protein sequence ID" value="AAK92871.1"/>
    <property type="molecule type" value="mRNA"/>
</dbReference>
<dbReference type="EMBL" id="BT044201">
    <property type="protein sequence ID" value="ACH92266.1"/>
    <property type="molecule type" value="mRNA"/>
</dbReference>
<dbReference type="RefSeq" id="NP_648352.2">
    <property type="nucleotide sequence ID" value="NM_140095.4"/>
</dbReference>
<dbReference type="SMR" id="Q9VT41"/>
<dbReference type="FunCoup" id="Q9VT41">
    <property type="interactions" value="1438"/>
</dbReference>
<dbReference type="STRING" id="7227.FBpp0076132"/>
<dbReference type="GlyGen" id="Q9VT41">
    <property type="glycosylation" value="1 site"/>
</dbReference>
<dbReference type="PaxDb" id="7227-FBpp0076132"/>
<dbReference type="DNASU" id="39141"/>
<dbReference type="EnsemblMetazoa" id="FBtr0076403">
    <property type="protein sequence ID" value="FBpp0076132"/>
    <property type="gene ID" value="FBgn0036038"/>
</dbReference>
<dbReference type="GeneID" id="39141"/>
<dbReference type="KEGG" id="dme:Dmel_CG18176"/>
<dbReference type="UCSC" id="CG18176-RA">
    <property type="organism name" value="d. melanogaster"/>
</dbReference>
<dbReference type="AGR" id="FB:FBgn0036038"/>
<dbReference type="CTD" id="39141"/>
<dbReference type="FlyBase" id="FBgn0036038">
    <property type="gene designation" value="defl"/>
</dbReference>
<dbReference type="VEuPathDB" id="VectorBase:FBgn0036038"/>
<dbReference type="eggNOG" id="KOG1988">
    <property type="taxonomic scope" value="Eukaryota"/>
</dbReference>
<dbReference type="GeneTree" id="ENSGT00390000011724"/>
<dbReference type="HOGENOM" id="CLU_013157_0_0_1"/>
<dbReference type="InParanoid" id="Q9VT41"/>
<dbReference type="OMA" id="GITWCTG"/>
<dbReference type="OrthoDB" id="1921953at2759"/>
<dbReference type="PhylomeDB" id="Q9VT41"/>
<dbReference type="Reactome" id="R-DME-6807505">
    <property type="pathway name" value="RNA polymerase II transcribes snRNA genes"/>
</dbReference>
<dbReference type="BioGRID-ORCS" id="39141">
    <property type="hits" value="1 hit in 1 CRISPR screen"/>
</dbReference>
<dbReference type="GenomeRNAi" id="39141"/>
<dbReference type="PRO" id="PR:Q9VT41"/>
<dbReference type="Proteomes" id="UP000000803">
    <property type="component" value="Chromosome 3L"/>
</dbReference>
<dbReference type="Bgee" id="FBgn0036038">
    <property type="expression patterns" value="Expressed in adult middle midgut class II enteroendocrine cell in adult midgut (Drosophila) and 13 other cell types or tissues"/>
</dbReference>
<dbReference type="GO" id="GO:0005737">
    <property type="term" value="C:cytoplasm"/>
    <property type="evidence" value="ECO:0000314"/>
    <property type="project" value="FlyBase"/>
</dbReference>
<dbReference type="GO" id="GO:0160232">
    <property type="term" value="C:INTAC complex"/>
    <property type="evidence" value="ECO:0000314"/>
    <property type="project" value="UniProtKB"/>
</dbReference>
<dbReference type="GO" id="GO:0032039">
    <property type="term" value="C:integrator complex"/>
    <property type="evidence" value="ECO:0000314"/>
    <property type="project" value="UniProtKB"/>
</dbReference>
<dbReference type="GO" id="GO:0005634">
    <property type="term" value="C:nucleus"/>
    <property type="evidence" value="ECO:0000314"/>
    <property type="project" value="FlyBase"/>
</dbReference>
<dbReference type="GO" id="GO:0160240">
    <property type="term" value="P:RNA polymerase II transcription initiation surveillance"/>
    <property type="evidence" value="ECO:0000314"/>
    <property type="project" value="UniProtKB"/>
</dbReference>
<dbReference type="GO" id="GO:0034472">
    <property type="term" value="P:snRNA 3'-end processing"/>
    <property type="evidence" value="ECO:0000314"/>
    <property type="project" value="FlyBase"/>
</dbReference>
<dbReference type="GO" id="GO:0016180">
    <property type="term" value="P:snRNA processing"/>
    <property type="evidence" value="ECO:0000315"/>
    <property type="project" value="FlyBase"/>
</dbReference>
<dbReference type="InterPro" id="IPR016024">
    <property type="entry name" value="ARM-type_fold"/>
</dbReference>
<dbReference type="InterPro" id="IPR033060">
    <property type="entry name" value="INTS7"/>
</dbReference>
<dbReference type="InterPro" id="IPR054519">
    <property type="entry name" value="INTS7_C"/>
</dbReference>
<dbReference type="InterPro" id="IPR056517">
    <property type="entry name" value="INTS7_HB"/>
</dbReference>
<dbReference type="InterPro" id="IPR056516">
    <property type="entry name" value="INTS7_N"/>
</dbReference>
<dbReference type="PANTHER" id="PTHR13322">
    <property type="entry name" value="C1ORF73 PROTEIN"/>
    <property type="match status" value="1"/>
</dbReference>
<dbReference type="PANTHER" id="PTHR13322:SF2">
    <property type="entry name" value="INTEGRATOR COMPLEX SUBUNIT 7"/>
    <property type="match status" value="1"/>
</dbReference>
<dbReference type="Pfam" id="PF22965">
    <property type="entry name" value="INTS7_C"/>
    <property type="match status" value="1"/>
</dbReference>
<dbReference type="Pfam" id="PF24437">
    <property type="entry name" value="INTS7_HB"/>
    <property type="match status" value="1"/>
</dbReference>
<dbReference type="Pfam" id="PF24436">
    <property type="entry name" value="INTS7_N"/>
    <property type="match status" value="1"/>
</dbReference>
<dbReference type="SUPFAM" id="SSF48371">
    <property type="entry name" value="ARM repeat"/>
    <property type="match status" value="1"/>
</dbReference>
<accession>Q9VT41</accession>
<accession>Q961P9</accession>
<reference evidence="15" key="1">
    <citation type="journal article" date="2000" name="Science">
        <title>The genome sequence of Drosophila melanogaster.</title>
        <authorList>
            <person name="Adams M.D."/>
            <person name="Celniker S.E."/>
            <person name="Holt R.A."/>
            <person name="Evans C.A."/>
            <person name="Gocayne J.D."/>
            <person name="Amanatides P.G."/>
            <person name="Scherer S.E."/>
            <person name="Li P.W."/>
            <person name="Hoskins R.A."/>
            <person name="Galle R.F."/>
            <person name="George R.A."/>
            <person name="Lewis S.E."/>
            <person name="Richards S."/>
            <person name="Ashburner M."/>
            <person name="Henderson S.N."/>
            <person name="Sutton G.G."/>
            <person name="Wortman J.R."/>
            <person name="Yandell M.D."/>
            <person name="Zhang Q."/>
            <person name="Chen L.X."/>
            <person name="Brandon R.C."/>
            <person name="Rogers Y.-H.C."/>
            <person name="Blazej R.G."/>
            <person name="Champe M."/>
            <person name="Pfeiffer B.D."/>
            <person name="Wan K.H."/>
            <person name="Doyle C."/>
            <person name="Baxter E.G."/>
            <person name="Helt G."/>
            <person name="Nelson C.R."/>
            <person name="Miklos G.L.G."/>
            <person name="Abril J.F."/>
            <person name="Agbayani A."/>
            <person name="An H.-J."/>
            <person name="Andrews-Pfannkoch C."/>
            <person name="Baldwin D."/>
            <person name="Ballew R.M."/>
            <person name="Basu A."/>
            <person name="Baxendale J."/>
            <person name="Bayraktaroglu L."/>
            <person name="Beasley E.M."/>
            <person name="Beeson K.Y."/>
            <person name="Benos P.V."/>
            <person name="Berman B.P."/>
            <person name="Bhandari D."/>
            <person name="Bolshakov S."/>
            <person name="Borkova D."/>
            <person name="Botchan M.R."/>
            <person name="Bouck J."/>
            <person name="Brokstein P."/>
            <person name="Brottier P."/>
            <person name="Burtis K.C."/>
            <person name="Busam D.A."/>
            <person name="Butler H."/>
            <person name="Cadieu E."/>
            <person name="Center A."/>
            <person name="Chandra I."/>
            <person name="Cherry J.M."/>
            <person name="Cawley S."/>
            <person name="Dahlke C."/>
            <person name="Davenport L.B."/>
            <person name="Davies P."/>
            <person name="de Pablos B."/>
            <person name="Delcher A."/>
            <person name="Deng Z."/>
            <person name="Mays A.D."/>
            <person name="Dew I."/>
            <person name="Dietz S.M."/>
            <person name="Dodson K."/>
            <person name="Doup L.E."/>
            <person name="Downes M."/>
            <person name="Dugan-Rocha S."/>
            <person name="Dunkov B.C."/>
            <person name="Dunn P."/>
            <person name="Durbin K.J."/>
            <person name="Evangelista C.C."/>
            <person name="Ferraz C."/>
            <person name="Ferriera S."/>
            <person name="Fleischmann W."/>
            <person name="Fosler C."/>
            <person name="Gabrielian A.E."/>
            <person name="Garg N.S."/>
            <person name="Gelbart W.M."/>
            <person name="Glasser K."/>
            <person name="Glodek A."/>
            <person name="Gong F."/>
            <person name="Gorrell J.H."/>
            <person name="Gu Z."/>
            <person name="Guan P."/>
            <person name="Harris M."/>
            <person name="Harris N.L."/>
            <person name="Harvey D.A."/>
            <person name="Heiman T.J."/>
            <person name="Hernandez J.R."/>
            <person name="Houck J."/>
            <person name="Hostin D."/>
            <person name="Houston K.A."/>
            <person name="Howland T.J."/>
            <person name="Wei M.-H."/>
            <person name="Ibegwam C."/>
            <person name="Jalali M."/>
            <person name="Kalush F."/>
            <person name="Karpen G.H."/>
            <person name="Ke Z."/>
            <person name="Kennison J.A."/>
            <person name="Ketchum K.A."/>
            <person name="Kimmel B.E."/>
            <person name="Kodira C.D."/>
            <person name="Kraft C.L."/>
            <person name="Kravitz S."/>
            <person name="Kulp D."/>
            <person name="Lai Z."/>
            <person name="Lasko P."/>
            <person name="Lei Y."/>
            <person name="Levitsky A.A."/>
            <person name="Li J.H."/>
            <person name="Li Z."/>
            <person name="Liang Y."/>
            <person name="Lin X."/>
            <person name="Liu X."/>
            <person name="Mattei B."/>
            <person name="McIntosh T.C."/>
            <person name="McLeod M.P."/>
            <person name="McPherson D."/>
            <person name="Merkulov G."/>
            <person name="Milshina N.V."/>
            <person name="Mobarry C."/>
            <person name="Morris J."/>
            <person name="Moshrefi A."/>
            <person name="Mount S.M."/>
            <person name="Moy M."/>
            <person name="Murphy B."/>
            <person name="Murphy L."/>
            <person name="Muzny D.M."/>
            <person name="Nelson D.L."/>
            <person name="Nelson D.R."/>
            <person name="Nelson K.A."/>
            <person name="Nixon K."/>
            <person name="Nusskern D.R."/>
            <person name="Pacleb J.M."/>
            <person name="Palazzolo M."/>
            <person name="Pittman G.S."/>
            <person name="Pan S."/>
            <person name="Pollard J."/>
            <person name="Puri V."/>
            <person name="Reese M.G."/>
            <person name="Reinert K."/>
            <person name="Remington K."/>
            <person name="Saunders R.D.C."/>
            <person name="Scheeler F."/>
            <person name="Shen H."/>
            <person name="Shue B.C."/>
            <person name="Siden-Kiamos I."/>
            <person name="Simpson M."/>
            <person name="Skupski M.P."/>
            <person name="Smith T.J."/>
            <person name="Spier E."/>
            <person name="Spradling A.C."/>
            <person name="Stapleton M."/>
            <person name="Strong R."/>
            <person name="Sun E."/>
            <person name="Svirskas R."/>
            <person name="Tector C."/>
            <person name="Turner R."/>
            <person name="Venter E."/>
            <person name="Wang A.H."/>
            <person name="Wang X."/>
            <person name="Wang Z.-Y."/>
            <person name="Wassarman D.A."/>
            <person name="Weinstock G.M."/>
            <person name="Weissenbach J."/>
            <person name="Williams S.M."/>
            <person name="Woodage T."/>
            <person name="Worley K.C."/>
            <person name="Wu D."/>
            <person name="Yang S."/>
            <person name="Yao Q.A."/>
            <person name="Ye J."/>
            <person name="Yeh R.-F."/>
            <person name="Zaveri J.S."/>
            <person name="Zhan M."/>
            <person name="Zhang G."/>
            <person name="Zhao Q."/>
            <person name="Zheng L."/>
            <person name="Zheng X.H."/>
            <person name="Zhong F.N."/>
            <person name="Zhong W."/>
            <person name="Zhou X."/>
            <person name="Zhu S.C."/>
            <person name="Zhu X."/>
            <person name="Smith H.O."/>
            <person name="Gibbs R.A."/>
            <person name="Myers E.W."/>
            <person name="Rubin G.M."/>
            <person name="Venter J.C."/>
        </authorList>
    </citation>
    <scope>NUCLEOTIDE SEQUENCE [LARGE SCALE GENOMIC DNA]</scope>
    <source>
        <strain evidence="15">Berkeley</strain>
    </source>
</reference>
<reference evidence="15" key="2">
    <citation type="journal article" date="2002" name="Genome Biol.">
        <title>Annotation of the Drosophila melanogaster euchromatic genome: a systematic review.</title>
        <authorList>
            <person name="Misra S."/>
            <person name="Crosby M.A."/>
            <person name="Mungall C.J."/>
            <person name="Matthews B.B."/>
            <person name="Campbell K.S."/>
            <person name="Hradecky P."/>
            <person name="Huang Y."/>
            <person name="Kaminker J.S."/>
            <person name="Millburn G.H."/>
            <person name="Prochnik S.E."/>
            <person name="Smith C.D."/>
            <person name="Tupy J.L."/>
            <person name="Whitfield E.J."/>
            <person name="Bayraktaroglu L."/>
            <person name="Berman B.P."/>
            <person name="Bettencourt B.R."/>
            <person name="Celniker S.E."/>
            <person name="de Grey A.D.N.J."/>
            <person name="Drysdale R.A."/>
            <person name="Harris N.L."/>
            <person name="Richter J."/>
            <person name="Russo S."/>
            <person name="Schroeder A.J."/>
            <person name="Shu S.Q."/>
            <person name="Stapleton M."/>
            <person name="Yamada C."/>
            <person name="Ashburner M."/>
            <person name="Gelbart W.M."/>
            <person name="Rubin G.M."/>
            <person name="Lewis S.E."/>
        </authorList>
    </citation>
    <scope>GENOME REANNOTATION</scope>
    <source>
        <strain evidence="15">Berkeley</strain>
    </source>
</reference>
<reference evidence="12" key="3">
    <citation type="journal article" date="2002" name="Genome Biol.">
        <title>A Drosophila full-length cDNA resource.</title>
        <authorList>
            <person name="Stapleton M."/>
            <person name="Carlson J.W."/>
            <person name="Brokstein P."/>
            <person name="Yu C."/>
            <person name="Champe M."/>
            <person name="George R.A."/>
            <person name="Guarin H."/>
            <person name="Kronmiller B."/>
            <person name="Pacleb J.M."/>
            <person name="Park S."/>
            <person name="Wan K.H."/>
            <person name="Rubin G.M."/>
            <person name="Celniker S.E."/>
        </authorList>
    </citation>
    <scope>NUCLEOTIDE SEQUENCE [LARGE SCALE MRNA]</scope>
    <source>
        <strain evidence="12">Berkeley</strain>
        <tissue evidence="12">Head</tissue>
    </source>
</reference>
<reference evidence="13" key="4">
    <citation type="submission" date="2008-09" db="EMBL/GenBank/DDBJ databases">
        <authorList>
            <person name="Carlson J."/>
            <person name="Booth B."/>
            <person name="Frise E."/>
            <person name="Park S."/>
            <person name="Wan K."/>
            <person name="Yu C."/>
            <person name="Celniker S."/>
        </authorList>
    </citation>
    <scope>NUCLEOTIDE SEQUENCE [LARGE SCALE MRNA]</scope>
</reference>
<reference evidence="11" key="5">
    <citation type="journal article" date="2009" name="Dev. Dyn.">
        <title>Phenotypic analysis of deflated/Ints7 function in Drosophila development.</title>
        <authorList>
            <person name="Rutkowski R.J."/>
            <person name="Warren W.D."/>
        </authorList>
    </citation>
    <scope>FUNCTION</scope>
    <scope>SUBCELLULAR LOCATION</scope>
    <scope>DEVELOPMENTAL STAGE</scope>
</reference>
<reference evidence="11" key="6">
    <citation type="journal article" date="2011" name="Mol. Cell. Biol.">
        <title>A subset of Drosophila integrator proteins is essential for efficient U7 snRNA and spliceosomal snRNA 3'-end formation.</title>
        <authorList>
            <person name="Ezzeddine N."/>
            <person name="Chen J."/>
            <person name="Waltenspiel B."/>
            <person name="Burch B."/>
            <person name="Albrecht T."/>
            <person name="Zhuo M."/>
            <person name="Warren W.D."/>
            <person name="Marzluff W.F."/>
            <person name="Wagner E.J."/>
        </authorList>
    </citation>
    <scope>FUNCTION</scope>
</reference>
<reference evidence="11" key="7">
    <citation type="journal article" date="2012" name="RNA">
        <title>An RNAi screen identifies additional members of the Drosophila Integrator complex and a requirement for cyclin C/Cdk8 in snRNA 3'-end formation.</title>
        <authorList>
            <person name="Chen J."/>
            <person name="Ezzeddine N."/>
            <person name="Waltenspiel B."/>
            <person name="Albrecht T.R."/>
            <person name="Warren W.D."/>
            <person name="Marzluff W.F."/>
            <person name="Wagner E.J."/>
        </authorList>
    </citation>
    <scope>SUBUNIT</scope>
</reference>
<reference key="8">
    <citation type="journal article" date="2019" name="Genes Dev.">
        <title>The Integrator complex cleaves nascent mRNAs to attenuate transcription.</title>
        <authorList>
            <person name="Tatomer D.C."/>
            <person name="Elrod N.D."/>
            <person name="Liang D."/>
            <person name="Xiao M.S."/>
            <person name="Jiang J.Z."/>
            <person name="Jonathan M."/>
            <person name="Huang K.L."/>
            <person name="Wagner E.J."/>
            <person name="Cherry S."/>
            <person name="Wilusz J.E."/>
        </authorList>
    </citation>
    <scope>IDENTIFICATION IN THE INTEGRATOR COMPLEX</scope>
</reference>
<reference key="9">
    <citation type="journal article" date="2020" name="Mol. Cell">
        <title>Integrator recruits protein phosphatase 2A to prevent pause release and facilitate transcription termination.</title>
        <authorList>
            <person name="Huang K.L."/>
            <person name="Jee D."/>
            <person name="Stein C.B."/>
            <person name="Elrod N.D."/>
            <person name="Henriques T."/>
            <person name="Mascibroda L.G."/>
            <person name="Baillat D."/>
            <person name="Russell W.K."/>
            <person name="Adelman K."/>
            <person name="Wagner E.J."/>
        </authorList>
    </citation>
    <scope>FUNCTION</scope>
    <scope>IDENTIFICATION IN THE INTAC COMPLEX</scope>
</reference>
<reference key="10">
    <citation type="journal article" date="2023" name="Mol. Cell">
        <title>IntS6 and the Integrator phosphatase module tune the efficiency of select premature transcription termination events.</title>
        <authorList>
            <person name="Fujiwara R."/>
            <person name="Zhai S.N."/>
            <person name="Liang D."/>
            <person name="Shah A.P."/>
            <person name="Tracey M."/>
            <person name="Ma X.K."/>
            <person name="Fields C.J."/>
            <person name="Mendoza-Figueroa M.S."/>
            <person name="Meline M.C."/>
            <person name="Tatomer D.C."/>
            <person name="Yang L."/>
            <person name="Wilusz J.E."/>
        </authorList>
    </citation>
    <scope>IDENTIFICATION IN THE INTAC COMPLEX</scope>
</reference>
<reference key="11">
    <citation type="journal article" date="2024" name="Mol. Cell">
        <title>Cytoplasmic binding partners of the Integrator endonuclease INTS11 and its paralog CPSF73 are required for their nuclear function.</title>
        <authorList>
            <person name="Lin M.H."/>
            <person name="Jensen M.K."/>
            <person name="Elrod N.D."/>
            <person name="Chu H.F."/>
            <person name="Haseley M."/>
            <person name="Beam A.C."/>
            <person name="Huang K.L."/>
            <person name="Chiang W."/>
            <person name="Russell W.K."/>
            <person name="Williams K."/>
            <person name="Proschel C."/>
            <person name="Wagner E.J."/>
            <person name="Tong L."/>
        </authorList>
    </citation>
    <scope>IDENTIFICATION IN THE INTEGRATOR COMPLEX</scope>
    <scope>SUBCELLULAR LOCATION</scope>
</reference>
<proteinExistence type="evidence at protein level"/>
<evidence type="ECO:0000256" key="1">
    <source>
        <dbReference type="SAM" id="MobiDB-lite"/>
    </source>
</evidence>
<evidence type="ECO:0000269" key="2">
    <source>
    </source>
</evidence>
<evidence type="ECO:0000269" key="3">
    <source>
    </source>
</evidence>
<evidence type="ECO:0000269" key="4">
    <source>
    </source>
</evidence>
<evidence type="ECO:0000269" key="5">
    <source>
    </source>
</evidence>
<evidence type="ECO:0000269" key="6">
    <source>
    </source>
</evidence>
<evidence type="ECO:0000269" key="7">
    <source>
    </source>
</evidence>
<evidence type="ECO:0000269" key="8">
    <source>
    </source>
</evidence>
<evidence type="ECO:0000303" key="9">
    <source>
    </source>
</evidence>
<evidence type="ECO:0000303" key="10">
    <source>
    </source>
</evidence>
<evidence type="ECO:0000305" key="11"/>
<evidence type="ECO:0000312" key="12">
    <source>
        <dbReference type="EMBL" id="AAK92871.1"/>
    </source>
</evidence>
<evidence type="ECO:0000312" key="13">
    <source>
        <dbReference type="EMBL" id="ACH92266.1"/>
    </source>
</evidence>
<evidence type="ECO:0000312" key="14">
    <source>
        <dbReference type="FlyBase" id="FBgn0036038"/>
    </source>
</evidence>
<evidence type="ECO:0000312" key="15">
    <source>
        <dbReference type="Proteomes" id="UP000000803"/>
    </source>
</evidence>
<comment type="function">
    <text evidence="3 4 6">Component of the integrator complex, a multiprotein complex that terminates RNA polymerase II (Pol II) transcription in the promoter-proximal region of genes (PubMed:21078872, PubMed:23097424, PubMed:32966759). The integrator complex provides a quality checkpoint during transcription elongation by driving premature transcription termination of transcripts that are unfavorably configured for transcriptional elongation: the complex terminates transcription by (1) catalyzing dephosphorylation of the C-terminal domain (CTD) of Pol II subunit Polr2A/Rbp1 and Spt5, and (2) degrading the exiting nascent RNA transcript via endonuclease activity (PubMed:32966759). The integrator complex is also involved in the 3'-end processing of the U7 snRNA, and also the spliceosomal snRNAs U1, U2, U4 and U5 (PubMed:21078872, PubMed:23097424).</text>
</comment>
<comment type="subunit">
    <text evidence="4 5 6 7 8">Belongs to the multiprotein complex Integrator, at least composed of IntS1, IntS2, IntS3, IntS4, omd/IntS5, IntS6, defl/IntS7, IntS8, IntS9, IntS10, IntS11, IntS12, asun/IntS13, IntS14 and IntS15 (PubMed:23097424, PubMed:31530651, PubMed:32966759, PubMed:37995689, PubMed:39032490). The core complex associates with protein phosphatase 2A subunits mts/PP2A and Pp2A-29B, to form the Integrator-PP2A (INTAC) complex (PubMed:32966759, PubMed:37995689).</text>
</comment>
<comment type="subcellular location">
    <subcellularLocation>
        <location evidence="2 8">Nucleus</location>
    </subcellularLocation>
    <subcellularLocation>
        <location evidence="2">Cytoplasm</location>
    </subcellularLocation>
    <text evidence="2">Predominantly in the nucleus.</text>
</comment>
<comment type="developmental stage">
    <text evidence="2">Expressed at low levels. First detected after cellularization, in the early epidermal tissues of embryos undergoing gastrulation. At later stages of embryogenesis, strongest expression is in the gut, and there is also expression in the central nervous system and perhaps the peripheral nervous system.</text>
</comment>
<comment type="miscellaneous">
    <text evidence="9">The name 'deflated' originates from the 'deflated balloon' appearance of mutant abdomens.</text>
</comment>
<comment type="similarity">
    <text evidence="11">Belongs to the Integrator subunit 7 family.</text>
</comment>
<gene>
    <name evidence="14" type="primary">defl</name>
    <name evidence="9 10" type="synonym">IntS7</name>
    <name evidence="14" type="ORF">CG18176</name>
</gene>
<sequence length="1001" mass="112288">MSHLTGTRVSTFNESFLNENEHDSNAVLMELDKGLRSTKQGIQCEAVVRFPRLFEKYPFPILINSSFIKLADYFVSGSNLLRFWVLRVCQQSENHLDKILNIDSFVRCIFVVMHSNDPVARALLLRTLGAVSRVIPEKQQVHHAIRRALDSHDTVEVEAAIYASSCFAAQSSSFAISMCAKISDMIESLQVPVPMKLLLIPVLRHMHHEATTASLVSRLCMDLLPKYPAQSFVVAIIDTLTQLSSRTLVGVPGQLDVLLDFMQDLRTPVRIQVLRSFNELAGRQSVHAWPKPAIKALIDRFELCTNSKEQFLFLSILLKLSECPLTCQQLLREHRVALLRLCIQCISKLDDYTTATQAMAVLSVLVAFGLKKKGSGEQVDDILHMVNLHMEGLLLCTAKRSECTRDLRRVLTYGIRITKANAEFGTSFIGIVTNSLGDKGAYPPANAELMCEALAGLCEHFQLRKYAFSTAEDLIVDENAMDTDELPPPKINPMLARLPLILHKLNTIIDQENCDQQLRSVEILSSLVLQTTMGCYLPQKVVQCFEKCLGRLNCWTLYRIARTASRYGHHYVAAHIYTKVSQIVISDHMHYFLVALSQISQAECILNYGLEYAYMRDNYAPKVAPEPLIPLMKRLEMASNLYQQALASLRAGSSPQHPCTFQLEYLKIRAQFLQTLHLAVTVKNAQVIVPPPAIAGSLAQNSRDYLQKFGHVTNQLRKLVKALKACEETYARLYKSSFDADHVTLEFLEVAEFQCALFAHIIESICYATPPEPPVFLTTGDHPETRYFAASCQRMEQMQKNLPQEPANAKTISNRHLDVIIAQIEIITKTPLCLPRYFFQILQSTQIKLSVSPQPRSATEPVNVQSGSNLVIKVEGVLQHFSKQKKHFRRVESVQLSLTSQLITPPPRSSQELPKQGANDTVTLNQIVKPQRDFLSGSFLLPISNGGHFQVTLETFVVDENGITWCTGPKSSMVVRVLEDPSKQGAPAPSTSQAVGQTRRF</sequence>
<protein>
    <recommendedName>
        <fullName evidence="9">Integrator complex subunit 7</fullName>
    </recommendedName>
    <alternativeName>
        <fullName evidence="9">Protein deflated</fullName>
    </alternativeName>
</protein>
<name>INT7_DROME</name>
<keyword id="KW-0963">Cytoplasm</keyword>
<keyword id="KW-0539">Nucleus</keyword>
<keyword id="KW-1185">Reference proteome</keyword>
<feature type="chain" id="PRO_0000437659" description="Integrator complex subunit 7">
    <location>
        <begin position="1"/>
        <end position="1001"/>
    </location>
</feature>
<feature type="region of interest" description="Disordered" evidence="1">
    <location>
        <begin position="980"/>
        <end position="1001"/>
    </location>
</feature>
<feature type="compositionally biased region" description="Polar residues" evidence="1">
    <location>
        <begin position="989"/>
        <end position="1001"/>
    </location>
</feature>
<feature type="sequence conflict" description="In Ref. 3; AAK92871." evidence="11" ref="3">
    <original>K</original>
    <variation>E</variation>
    <location>
        <position position="490"/>
    </location>
</feature>
<organism evidence="15">
    <name type="scientific">Drosophila melanogaster</name>
    <name type="common">Fruit fly</name>
    <dbReference type="NCBI Taxonomy" id="7227"/>
    <lineage>
        <taxon>Eukaryota</taxon>
        <taxon>Metazoa</taxon>
        <taxon>Ecdysozoa</taxon>
        <taxon>Arthropoda</taxon>
        <taxon>Hexapoda</taxon>
        <taxon>Insecta</taxon>
        <taxon>Pterygota</taxon>
        <taxon>Neoptera</taxon>
        <taxon>Endopterygota</taxon>
        <taxon>Diptera</taxon>
        <taxon>Brachycera</taxon>
        <taxon>Muscomorpha</taxon>
        <taxon>Ephydroidea</taxon>
        <taxon>Drosophilidae</taxon>
        <taxon>Drosophila</taxon>
        <taxon>Sophophora</taxon>
    </lineage>
</organism>